<proteinExistence type="evidence at transcript level"/>
<evidence type="ECO:0000269" key="1">
    <source>
    </source>
</evidence>
<evidence type="ECO:0000303" key="2">
    <source>
    </source>
</evidence>
<gene>
    <name evidence="2" type="primary">Yob</name>
</gene>
<comment type="function">
    <text evidence="1">Male determiner protein (M-factor) that controls male somatic sexual differentiation. Acts as a dominant factor that regulates the mRNA splicing of doublesex (dsx) transcripts and promotes expression of male splice forms of dsx.</text>
</comment>
<comment type="developmental stage">
    <text evidence="1">Expression is male-specific. Transcription begins in embryos between 2 and 2.5 hours after oviposition, before blastoderm formation, and expression and continues throughout the life of the mosquito. Expression precedes establishment of sex-specific splicing of dsx by up to 6 hours.</text>
</comment>
<comment type="disruption phenotype">
    <text evidence="1">Male-specific lethality in embryos.</text>
</comment>
<accession>P0DP77</accession>
<protein>
    <recommendedName>
        <fullName evidence="2">Male determiner protein Yob</fullName>
    </recommendedName>
</protein>
<feature type="chain" id="PRO_0000441318" description="Male determiner protein Yob">
    <location>
        <begin position="1"/>
        <end position="56"/>
    </location>
</feature>
<reference key="1">
    <citation type="journal article" date="2016" name="Science">
        <title>A maleness gene in the malaria mosquito Anopheles gambiae.</title>
        <authorList>
            <person name="Krzywinska E."/>
            <person name="Dennison N.J."/>
            <person name="Lycett G.J."/>
            <person name="Krzywinski J."/>
        </authorList>
    </citation>
    <scope>NUCLEOTIDE SEQUENCE [GENOMIC DNA]</scope>
    <scope>FUNCTION</scope>
    <scope>DISRUPTION PHENOTYPE</scope>
    <scope>DEVELOPMENTAL STAGE</scope>
</reference>
<reference key="2">
    <citation type="journal article" date="2002" name="Science">
        <title>The genome sequence of the malaria mosquito Anopheles gambiae.</title>
        <authorList>
            <person name="Holt R.A."/>
            <person name="Subramanian G.M."/>
            <person name="Halpern A."/>
            <person name="Sutton G.G."/>
            <person name="Charlab R."/>
            <person name="Nusskern D.R."/>
            <person name="Wincker P."/>
            <person name="Clark A.G."/>
            <person name="Ribeiro J.M.C."/>
            <person name="Wides R."/>
            <person name="Salzberg S.L."/>
            <person name="Loftus B.J."/>
            <person name="Yandell M.D."/>
            <person name="Majoros W.H."/>
            <person name="Rusch D.B."/>
            <person name="Lai Z."/>
            <person name="Kraft C.L."/>
            <person name="Abril J.F."/>
            <person name="Anthouard V."/>
            <person name="Arensburger P."/>
            <person name="Atkinson P.W."/>
            <person name="Baden H."/>
            <person name="de Berardinis V."/>
            <person name="Baldwin D."/>
            <person name="Benes V."/>
            <person name="Biedler J."/>
            <person name="Blass C."/>
            <person name="Bolanos R."/>
            <person name="Boscus D."/>
            <person name="Barnstead M."/>
            <person name="Cai S."/>
            <person name="Center A."/>
            <person name="Chaturverdi K."/>
            <person name="Christophides G.K."/>
            <person name="Chrystal M.A.M."/>
            <person name="Clamp M."/>
            <person name="Cravchik A."/>
            <person name="Curwen V."/>
            <person name="Dana A."/>
            <person name="Delcher A."/>
            <person name="Dew I."/>
            <person name="Evans C.A."/>
            <person name="Flanigan M."/>
            <person name="Grundschober-Freimoser A."/>
            <person name="Friedli L."/>
            <person name="Gu Z."/>
            <person name="Guan P."/>
            <person name="Guigo R."/>
            <person name="Hillenmeyer M.E."/>
            <person name="Hladun S.L."/>
            <person name="Hogan J.R."/>
            <person name="Hong Y.S."/>
            <person name="Hoover J."/>
            <person name="Jaillon O."/>
            <person name="Ke Z."/>
            <person name="Kodira C.D."/>
            <person name="Kokoza E."/>
            <person name="Koutsos A."/>
            <person name="Letunic I."/>
            <person name="Levitsky A.A."/>
            <person name="Liang Y."/>
            <person name="Lin J.-J."/>
            <person name="Lobo N.F."/>
            <person name="Lopez J.R."/>
            <person name="Malek J.A."/>
            <person name="McIntosh T.C."/>
            <person name="Meister S."/>
            <person name="Miller J.R."/>
            <person name="Mobarry C."/>
            <person name="Mongin E."/>
            <person name="Murphy S.D."/>
            <person name="O'Brochta D.A."/>
            <person name="Pfannkoch C."/>
            <person name="Qi R."/>
            <person name="Regier M.A."/>
            <person name="Remington K."/>
            <person name="Shao H."/>
            <person name="Sharakhova M.V."/>
            <person name="Sitter C.D."/>
            <person name="Shetty J."/>
            <person name="Smith T.J."/>
            <person name="Strong R."/>
            <person name="Sun J."/>
            <person name="Thomasova D."/>
            <person name="Ton L.Q."/>
            <person name="Topalis P."/>
            <person name="Tu Z.J."/>
            <person name="Unger M.F."/>
            <person name="Walenz B."/>
            <person name="Wang A.H."/>
            <person name="Wang J."/>
            <person name="Wang M."/>
            <person name="Wang X."/>
            <person name="Woodford K.J."/>
            <person name="Wortman J.R."/>
            <person name="Wu M."/>
            <person name="Yao A."/>
            <person name="Zdobnov E.M."/>
            <person name="Zhang H."/>
            <person name="Zhao Q."/>
            <person name="Zhao S."/>
            <person name="Zhu S.C."/>
            <person name="Zhimulev I."/>
            <person name="Coluzzi M."/>
            <person name="della Torre A."/>
            <person name="Roth C.W."/>
            <person name="Louis C."/>
            <person name="Kalush F."/>
            <person name="Mural R.J."/>
            <person name="Myers E.W."/>
            <person name="Adams M.D."/>
            <person name="Smith H.O."/>
            <person name="Broder S."/>
            <person name="Gardner M.J."/>
            <person name="Fraser C.M."/>
            <person name="Birney E."/>
            <person name="Bork P."/>
            <person name="Brey P.T."/>
            <person name="Venter J.C."/>
            <person name="Weissenbach J."/>
            <person name="Kafatos F.C."/>
            <person name="Collins F.H."/>
            <person name="Hoffman S.L."/>
        </authorList>
    </citation>
    <scope>NUCLEOTIDE SEQUENCE [LARGE SCALE GENOMIC DNA]</scope>
    <source>
        <strain>PEST</strain>
    </source>
</reference>
<sequence length="56" mass="6281">MFSQSACVQVHIKTNELHTAVVEKVILAMISSCRTDNNQALHKLLHVAVCEENYNV</sequence>
<keyword id="KW-0221">Differentiation</keyword>
<keyword id="KW-0507">mRNA processing</keyword>
<keyword id="KW-0508">mRNA splicing</keyword>
<keyword id="KW-1185">Reference proteome</keyword>
<keyword id="KW-0726">Sexual differentiation</keyword>
<organism>
    <name type="scientific">Anopheles gambiae</name>
    <name type="common">African malaria mosquito</name>
    <dbReference type="NCBI Taxonomy" id="7165"/>
    <lineage>
        <taxon>Eukaryota</taxon>
        <taxon>Metazoa</taxon>
        <taxon>Ecdysozoa</taxon>
        <taxon>Arthropoda</taxon>
        <taxon>Hexapoda</taxon>
        <taxon>Insecta</taxon>
        <taxon>Pterygota</taxon>
        <taxon>Neoptera</taxon>
        <taxon>Endopterygota</taxon>
        <taxon>Diptera</taxon>
        <taxon>Nematocera</taxon>
        <taxon>Culicoidea</taxon>
        <taxon>Culicidae</taxon>
        <taxon>Anophelinae</taxon>
        <taxon>Anopheles</taxon>
    </lineage>
</organism>
<dbReference type="EMBL" id="AAAB01008227">
    <property type="status" value="NOT_ANNOTATED_CDS"/>
    <property type="molecule type" value="Genomic_DNA"/>
</dbReference>
<dbReference type="SMR" id="P0DP77"/>
<dbReference type="STRING" id="7165.P0DP77"/>
<dbReference type="EnsemblMetazoa" id="AGAP029221-RA">
    <property type="protein sequence ID" value="AGAP029221-PA"/>
    <property type="gene ID" value="AGAP029221"/>
</dbReference>
<dbReference type="VEuPathDB" id="VectorBase:AGAP029221"/>
<dbReference type="InParanoid" id="P0DP77"/>
<dbReference type="Proteomes" id="UP000007062">
    <property type="component" value="Unassembled WGS sequence"/>
</dbReference>
<dbReference type="GO" id="GO:0030154">
    <property type="term" value="P:cell differentiation"/>
    <property type="evidence" value="ECO:0007669"/>
    <property type="project" value="UniProtKB-KW"/>
</dbReference>
<dbReference type="GO" id="GO:0030238">
    <property type="term" value="P:male sex determination"/>
    <property type="evidence" value="ECO:0000314"/>
    <property type="project" value="UniProtKB"/>
</dbReference>
<dbReference type="GO" id="GO:0046661">
    <property type="term" value="P:male sex differentiation"/>
    <property type="evidence" value="ECO:0000314"/>
    <property type="project" value="UniProtKB"/>
</dbReference>
<dbReference type="GO" id="GO:0006397">
    <property type="term" value="P:mRNA processing"/>
    <property type="evidence" value="ECO:0007669"/>
    <property type="project" value="UniProtKB-KW"/>
</dbReference>
<dbReference type="GO" id="GO:0048024">
    <property type="term" value="P:regulation of mRNA splicing, via spliceosome"/>
    <property type="evidence" value="ECO:0000314"/>
    <property type="project" value="UniProtKB"/>
</dbReference>
<dbReference type="GO" id="GO:0008380">
    <property type="term" value="P:RNA splicing"/>
    <property type="evidence" value="ECO:0007669"/>
    <property type="project" value="UniProtKB-KW"/>
</dbReference>
<name>YOB_ANOGA</name>